<sequence length="130" mass="15853">MTRIRRGYIARRRRTKTRFFASSWRGARGNLTRAIIQQRIRAWFSSHRDRTRQKRDFRRLWITRINAAIRENGRSSIYSKLIHNLYKRQLFLNRKMLAQLAILNRNCLYMISNQILKEVDWQESATILEI</sequence>
<dbReference type="EMBL" id="EU262890">
    <property type="protein sequence ID" value="ABX10060.1"/>
    <property type="molecule type" value="Genomic_DNA"/>
</dbReference>
<dbReference type="RefSeq" id="YP_001687306.1">
    <property type="nucleotide sequence ID" value="NC_010360.2"/>
</dbReference>
<dbReference type="SMR" id="B0Z567"/>
<dbReference type="GeneID" id="5955349"/>
<dbReference type="GO" id="GO:0009507">
    <property type="term" value="C:chloroplast"/>
    <property type="evidence" value="ECO:0007669"/>
    <property type="project" value="UniProtKB-SubCell"/>
</dbReference>
<dbReference type="GO" id="GO:1990904">
    <property type="term" value="C:ribonucleoprotein complex"/>
    <property type="evidence" value="ECO:0007669"/>
    <property type="project" value="UniProtKB-KW"/>
</dbReference>
<dbReference type="GO" id="GO:0005840">
    <property type="term" value="C:ribosome"/>
    <property type="evidence" value="ECO:0007669"/>
    <property type="project" value="UniProtKB-KW"/>
</dbReference>
<dbReference type="GO" id="GO:0019843">
    <property type="term" value="F:rRNA binding"/>
    <property type="evidence" value="ECO:0007669"/>
    <property type="project" value="UniProtKB-UniRule"/>
</dbReference>
<dbReference type="GO" id="GO:0003735">
    <property type="term" value="F:structural constituent of ribosome"/>
    <property type="evidence" value="ECO:0007669"/>
    <property type="project" value="InterPro"/>
</dbReference>
<dbReference type="GO" id="GO:0000027">
    <property type="term" value="P:ribosomal large subunit assembly"/>
    <property type="evidence" value="ECO:0007669"/>
    <property type="project" value="UniProtKB-UniRule"/>
</dbReference>
<dbReference type="GO" id="GO:0006412">
    <property type="term" value="P:translation"/>
    <property type="evidence" value="ECO:0007669"/>
    <property type="project" value="InterPro"/>
</dbReference>
<dbReference type="CDD" id="cd07026">
    <property type="entry name" value="Ribosomal_L20"/>
    <property type="match status" value="1"/>
</dbReference>
<dbReference type="FunFam" id="1.10.1900.20:FF:000001">
    <property type="entry name" value="50S ribosomal protein L20"/>
    <property type="match status" value="1"/>
</dbReference>
<dbReference type="Gene3D" id="6.10.160.10">
    <property type="match status" value="1"/>
</dbReference>
<dbReference type="Gene3D" id="1.10.1900.20">
    <property type="entry name" value="Ribosomal protein L20"/>
    <property type="match status" value="1"/>
</dbReference>
<dbReference type="HAMAP" id="MF_00382">
    <property type="entry name" value="Ribosomal_bL20"/>
    <property type="match status" value="1"/>
</dbReference>
<dbReference type="InterPro" id="IPR005813">
    <property type="entry name" value="Ribosomal_bL20"/>
</dbReference>
<dbReference type="InterPro" id="IPR049946">
    <property type="entry name" value="RIBOSOMAL_L20_CS"/>
</dbReference>
<dbReference type="InterPro" id="IPR035566">
    <property type="entry name" value="Ribosomal_protein_bL20_C"/>
</dbReference>
<dbReference type="NCBIfam" id="TIGR01032">
    <property type="entry name" value="rplT_bact"/>
    <property type="match status" value="1"/>
</dbReference>
<dbReference type="PANTHER" id="PTHR10986">
    <property type="entry name" value="39S RIBOSOMAL PROTEIN L20"/>
    <property type="match status" value="1"/>
</dbReference>
<dbReference type="Pfam" id="PF00453">
    <property type="entry name" value="Ribosomal_L20"/>
    <property type="match status" value="1"/>
</dbReference>
<dbReference type="PRINTS" id="PR00062">
    <property type="entry name" value="RIBOSOMALL20"/>
</dbReference>
<dbReference type="SUPFAM" id="SSF74731">
    <property type="entry name" value="Ribosomal protein L20"/>
    <property type="match status" value="1"/>
</dbReference>
<dbReference type="PROSITE" id="PS00937">
    <property type="entry name" value="RIBOSOMAL_L20"/>
    <property type="match status" value="1"/>
</dbReference>
<gene>
    <name evidence="1" type="primary">rpl20</name>
</gene>
<reference key="1">
    <citation type="journal article" date="2008" name="Nucleic Acids Res.">
        <title>The complete nucleotide sequences of the five genetically distinct plastid genomes of Oenothera, subsection Oenothera: I. Sequence evaluation and plastome evolution.</title>
        <authorList>
            <person name="Greiner S."/>
            <person name="Wang X."/>
            <person name="Rauwolf U."/>
            <person name="Silber M.V."/>
            <person name="Mayer K."/>
            <person name="Meurer J."/>
            <person name="Haberer G."/>
            <person name="Herrmann R.G."/>
        </authorList>
    </citation>
    <scope>NUCLEOTIDE SEQUENCE [LARGE SCALE GENOMIC DNA]</scope>
    <source>
        <strain>cv. Rr-lamarckiana Sweden</strain>
    </source>
</reference>
<keyword id="KW-0150">Chloroplast</keyword>
<keyword id="KW-0934">Plastid</keyword>
<keyword id="KW-0687">Ribonucleoprotein</keyword>
<keyword id="KW-0689">Ribosomal protein</keyword>
<keyword id="KW-0694">RNA-binding</keyword>
<keyword id="KW-0699">rRNA-binding</keyword>
<protein>
    <recommendedName>
        <fullName evidence="1">Large ribosomal subunit protein bL20c</fullName>
    </recommendedName>
    <alternativeName>
        <fullName evidence="2">50S ribosomal protein L20, chloroplastic</fullName>
    </alternativeName>
</protein>
<name>RK20_OENGL</name>
<geneLocation type="chloroplast"/>
<organism>
    <name type="scientific">Oenothera glazioviana</name>
    <name type="common">Large-flowered evening primrose</name>
    <name type="synonym">Oenothera erythrosepala</name>
    <dbReference type="NCBI Taxonomy" id="482428"/>
    <lineage>
        <taxon>Eukaryota</taxon>
        <taxon>Viridiplantae</taxon>
        <taxon>Streptophyta</taxon>
        <taxon>Embryophyta</taxon>
        <taxon>Tracheophyta</taxon>
        <taxon>Spermatophyta</taxon>
        <taxon>Magnoliopsida</taxon>
        <taxon>eudicotyledons</taxon>
        <taxon>Gunneridae</taxon>
        <taxon>Pentapetalae</taxon>
        <taxon>rosids</taxon>
        <taxon>malvids</taxon>
        <taxon>Myrtales</taxon>
        <taxon>Onagraceae</taxon>
        <taxon>Onagroideae</taxon>
        <taxon>Onagreae</taxon>
        <taxon>Oenothera</taxon>
    </lineage>
</organism>
<accession>B0Z567</accession>
<evidence type="ECO:0000255" key="1">
    <source>
        <dbReference type="HAMAP-Rule" id="MF_00382"/>
    </source>
</evidence>
<evidence type="ECO:0000305" key="2"/>
<feature type="chain" id="PRO_0000355520" description="Large ribosomal subunit protein bL20c">
    <location>
        <begin position="1"/>
        <end position="130"/>
    </location>
</feature>
<proteinExistence type="inferred from homology"/>
<comment type="function">
    <text evidence="1">Binds directly to 23S ribosomal RNA and is necessary for the in vitro assembly process of the 50S ribosomal subunit. It is not involved in the protein synthesizing functions of that subunit.</text>
</comment>
<comment type="subcellular location">
    <subcellularLocation>
        <location>Plastid</location>
        <location>Chloroplast</location>
    </subcellularLocation>
</comment>
<comment type="similarity">
    <text evidence="1">Belongs to the bacterial ribosomal protein bL20 family.</text>
</comment>